<feature type="chain" id="PRO_0000049703" description="UPF0750 membrane protein YpjC">
    <location>
        <begin position="1"/>
        <end position="290"/>
    </location>
</feature>
<feature type="transmembrane region" description="Helical" evidence="1">
    <location>
        <begin position="9"/>
        <end position="29"/>
    </location>
</feature>
<feature type="transmembrane region" description="Helical" evidence="1">
    <location>
        <begin position="47"/>
        <end position="67"/>
    </location>
</feature>
<feature type="transmembrane region" description="Helical" evidence="1">
    <location>
        <begin position="75"/>
        <end position="95"/>
    </location>
</feature>
<feature type="transmembrane region" description="Helical" evidence="1">
    <location>
        <begin position="106"/>
        <end position="126"/>
    </location>
</feature>
<feature type="transmembrane region" description="Helical" evidence="1">
    <location>
        <begin position="146"/>
        <end position="166"/>
    </location>
</feature>
<feature type="transmembrane region" description="Helical" evidence="1">
    <location>
        <begin position="179"/>
        <end position="199"/>
    </location>
</feature>
<feature type="sequence conflict" description="In Ref. 1; AAA92872." evidence="2" ref="1">
    <original>ISPSISNLVLNIPIFFIGWRL</original>
    <variation>M</variation>
    <location>
        <begin position="51"/>
        <end position="71"/>
    </location>
</feature>
<proteinExistence type="inferred from homology"/>
<organism>
    <name type="scientific">Bacillus subtilis (strain 168)</name>
    <dbReference type="NCBI Taxonomy" id="224308"/>
    <lineage>
        <taxon>Bacteria</taxon>
        <taxon>Bacillati</taxon>
        <taxon>Bacillota</taxon>
        <taxon>Bacilli</taxon>
        <taxon>Bacillales</taxon>
        <taxon>Bacillaceae</taxon>
        <taxon>Bacillus</taxon>
    </lineage>
</organism>
<gene>
    <name type="primary">ypjC</name>
    <name type="synonym">jojC</name>
    <name type="ordered locus">BSU22510</name>
</gene>
<sequence length="290" mass="31961">MLGEIRLKNIFFILIGAAIFSFGLVHFNMQNNLAEGGFTGITLLLYALFHISPSISNLVLNIPIFFIGWRLLGRTMFVYTLVGTVALSLFLSIFQRYEIHMPLQHDLALAALFAGVFIGAGLGIIFKFGGTTGGVDIIARLVNKYFGIPMGRTMFAFDACVIILSLLTYLSYKEAMYTLVAVFVAARLIDFIQEGGYAAKGATIISSKNDLIQKKILEEMERGVTILKGQGSYTKEDIDVLYCVVPKNELVMLKSVINSIDPHAFVAVSDVHDVLGEGFTLDENKNPLPR</sequence>
<comment type="subcellular location">
    <subcellularLocation>
        <location evidence="2">Cell membrane</location>
        <topology evidence="2">Multi-pass membrane protein</topology>
    </subcellularLocation>
</comment>
<comment type="similarity">
    <text evidence="2">Belongs to the UPF0750 family.</text>
</comment>
<comment type="sequence caution" evidence="2">
    <conflict type="erroneous initiation">
        <sequence resource="EMBL-CDS" id="AAA92872"/>
    </conflict>
</comment>
<comment type="sequence caution" evidence="2">
    <conflict type="erroneous initiation">
        <sequence resource="EMBL-CDS" id="AAB38440"/>
    </conflict>
</comment>
<reference key="1">
    <citation type="journal article" date="1996" name="Microbiology">
        <title>Sequence analysis of the Bacillus subtilis chromosome region between the serA and kdg loci cloned in a yeast artificial chromosome.</title>
        <authorList>
            <person name="Sorokin A.V."/>
            <person name="Azevedo V."/>
            <person name="Zumstein E."/>
            <person name="Galleron N."/>
            <person name="Ehrlich S.D."/>
            <person name="Serror P."/>
        </authorList>
    </citation>
    <scope>NUCLEOTIDE SEQUENCE [GENOMIC DNA]</scope>
    <source>
        <strain>168 / Marburg / ATCC 6051 / DSM 10 / JCM 1465 / NBRC 13719 / NCIMB 3610 / NRRL NRS-744 / VKM B-501</strain>
    </source>
</reference>
<reference key="2">
    <citation type="journal article" date="1997" name="Nature">
        <title>The complete genome sequence of the Gram-positive bacterium Bacillus subtilis.</title>
        <authorList>
            <person name="Kunst F."/>
            <person name="Ogasawara N."/>
            <person name="Moszer I."/>
            <person name="Albertini A.M."/>
            <person name="Alloni G."/>
            <person name="Azevedo V."/>
            <person name="Bertero M.G."/>
            <person name="Bessieres P."/>
            <person name="Bolotin A."/>
            <person name="Borchert S."/>
            <person name="Borriss R."/>
            <person name="Boursier L."/>
            <person name="Brans A."/>
            <person name="Braun M."/>
            <person name="Brignell S.C."/>
            <person name="Bron S."/>
            <person name="Brouillet S."/>
            <person name="Bruschi C.V."/>
            <person name="Caldwell B."/>
            <person name="Capuano V."/>
            <person name="Carter N.M."/>
            <person name="Choi S.-K."/>
            <person name="Codani J.-J."/>
            <person name="Connerton I.F."/>
            <person name="Cummings N.J."/>
            <person name="Daniel R.A."/>
            <person name="Denizot F."/>
            <person name="Devine K.M."/>
            <person name="Duesterhoeft A."/>
            <person name="Ehrlich S.D."/>
            <person name="Emmerson P.T."/>
            <person name="Entian K.-D."/>
            <person name="Errington J."/>
            <person name="Fabret C."/>
            <person name="Ferrari E."/>
            <person name="Foulger D."/>
            <person name="Fritz C."/>
            <person name="Fujita M."/>
            <person name="Fujita Y."/>
            <person name="Fuma S."/>
            <person name="Galizzi A."/>
            <person name="Galleron N."/>
            <person name="Ghim S.-Y."/>
            <person name="Glaser P."/>
            <person name="Goffeau A."/>
            <person name="Golightly E.J."/>
            <person name="Grandi G."/>
            <person name="Guiseppi G."/>
            <person name="Guy B.J."/>
            <person name="Haga K."/>
            <person name="Haiech J."/>
            <person name="Harwood C.R."/>
            <person name="Henaut A."/>
            <person name="Hilbert H."/>
            <person name="Holsappel S."/>
            <person name="Hosono S."/>
            <person name="Hullo M.-F."/>
            <person name="Itaya M."/>
            <person name="Jones L.-M."/>
            <person name="Joris B."/>
            <person name="Karamata D."/>
            <person name="Kasahara Y."/>
            <person name="Klaerr-Blanchard M."/>
            <person name="Klein C."/>
            <person name="Kobayashi Y."/>
            <person name="Koetter P."/>
            <person name="Koningstein G."/>
            <person name="Krogh S."/>
            <person name="Kumano M."/>
            <person name="Kurita K."/>
            <person name="Lapidus A."/>
            <person name="Lardinois S."/>
            <person name="Lauber J."/>
            <person name="Lazarevic V."/>
            <person name="Lee S.-M."/>
            <person name="Levine A."/>
            <person name="Liu H."/>
            <person name="Masuda S."/>
            <person name="Mauel C."/>
            <person name="Medigue C."/>
            <person name="Medina N."/>
            <person name="Mellado R.P."/>
            <person name="Mizuno M."/>
            <person name="Moestl D."/>
            <person name="Nakai S."/>
            <person name="Noback M."/>
            <person name="Noone D."/>
            <person name="O'Reilly M."/>
            <person name="Ogawa K."/>
            <person name="Ogiwara A."/>
            <person name="Oudega B."/>
            <person name="Park S.-H."/>
            <person name="Parro V."/>
            <person name="Pohl T.M."/>
            <person name="Portetelle D."/>
            <person name="Porwollik S."/>
            <person name="Prescott A.M."/>
            <person name="Presecan E."/>
            <person name="Pujic P."/>
            <person name="Purnelle B."/>
            <person name="Rapoport G."/>
            <person name="Rey M."/>
            <person name="Reynolds S."/>
            <person name="Rieger M."/>
            <person name="Rivolta C."/>
            <person name="Rocha E."/>
            <person name="Roche B."/>
            <person name="Rose M."/>
            <person name="Sadaie Y."/>
            <person name="Sato T."/>
            <person name="Scanlan E."/>
            <person name="Schleich S."/>
            <person name="Schroeter R."/>
            <person name="Scoffone F."/>
            <person name="Sekiguchi J."/>
            <person name="Sekowska A."/>
            <person name="Seror S.J."/>
            <person name="Serror P."/>
            <person name="Shin B.-S."/>
            <person name="Soldo B."/>
            <person name="Sorokin A."/>
            <person name="Tacconi E."/>
            <person name="Takagi T."/>
            <person name="Takahashi H."/>
            <person name="Takemaru K."/>
            <person name="Takeuchi M."/>
            <person name="Tamakoshi A."/>
            <person name="Tanaka T."/>
            <person name="Terpstra P."/>
            <person name="Tognoni A."/>
            <person name="Tosato V."/>
            <person name="Uchiyama S."/>
            <person name="Vandenbol M."/>
            <person name="Vannier F."/>
            <person name="Vassarotti A."/>
            <person name="Viari A."/>
            <person name="Wambutt R."/>
            <person name="Wedler E."/>
            <person name="Wedler H."/>
            <person name="Weitzenegger T."/>
            <person name="Winters P."/>
            <person name="Wipat A."/>
            <person name="Yamamoto H."/>
            <person name="Yamane K."/>
            <person name="Yasumoto K."/>
            <person name="Yata K."/>
            <person name="Yoshida K."/>
            <person name="Yoshikawa H.-F."/>
            <person name="Zumstein E."/>
            <person name="Yoshikawa H."/>
            <person name="Danchin A."/>
        </authorList>
    </citation>
    <scope>NUCLEOTIDE SEQUENCE [LARGE SCALE GENOMIC DNA]</scope>
    <source>
        <strain>168</strain>
    </source>
</reference>
<accession>P42978</accession>
<dbReference type="EMBL" id="L38424">
    <property type="protein sequence ID" value="AAA92872.1"/>
    <property type="status" value="ALT_INIT"/>
    <property type="molecule type" value="Genomic_DNA"/>
</dbReference>
<dbReference type="EMBL" id="L47709">
    <property type="protein sequence ID" value="AAB38440.1"/>
    <property type="status" value="ALT_INIT"/>
    <property type="molecule type" value="Genomic_DNA"/>
</dbReference>
<dbReference type="EMBL" id="AL009126">
    <property type="protein sequence ID" value="CAB14167.2"/>
    <property type="molecule type" value="Genomic_DNA"/>
</dbReference>
<dbReference type="PIR" id="C69937">
    <property type="entry name" value="C69937"/>
</dbReference>
<dbReference type="RefSeq" id="NP_390132.2">
    <property type="nucleotide sequence ID" value="NC_000964.3"/>
</dbReference>
<dbReference type="RefSeq" id="WP_003230635.1">
    <property type="nucleotide sequence ID" value="NZ_OZ025638.1"/>
</dbReference>
<dbReference type="SMR" id="P42978"/>
<dbReference type="FunCoup" id="P42978">
    <property type="interactions" value="11"/>
</dbReference>
<dbReference type="STRING" id="224308.BSU22510"/>
<dbReference type="PaxDb" id="224308-BSU22510"/>
<dbReference type="EnsemblBacteria" id="CAB14167">
    <property type="protein sequence ID" value="CAB14167"/>
    <property type="gene ID" value="BSU_22510"/>
</dbReference>
<dbReference type="GeneID" id="939023"/>
<dbReference type="KEGG" id="bsu:BSU22510"/>
<dbReference type="PATRIC" id="fig|224308.179.peg.2455"/>
<dbReference type="eggNOG" id="COG1284">
    <property type="taxonomic scope" value="Bacteria"/>
</dbReference>
<dbReference type="InParanoid" id="P42978"/>
<dbReference type="OrthoDB" id="1758221at2"/>
<dbReference type="PhylomeDB" id="P42978"/>
<dbReference type="BioCyc" id="BSUB:BSU22510-MONOMER"/>
<dbReference type="PRO" id="PR:P42978"/>
<dbReference type="Proteomes" id="UP000001570">
    <property type="component" value="Chromosome"/>
</dbReference>
<dbReference type="GO" id="GO:0005886">
    <property type="term" value="C:plasma membrane"/>
    <property type="evidence" value="ECO:0007669"/>
    <property type="project" value="UniProtKB-SubCell"/>
</dbReference>
<dbReference type="CDD" id="cd16380">
    <property type="entry name" value="YitT_C"/>
    <property type="match status" value="1"/>
</dbReference>
<dbReference type="Gene3D" id="3.30.70.120">
    <property type="match status" value="1"/>
</dbReference>
<dbReference type="InterPro" id="IPR019264">
    <property type="entry name" value="DUF2179"/>
</dbReference>
<dbReference type="InterPro" id="IPR015867">
    <property type="entry name" value="N-reg_PII/ATP_PRibTrfase_C"/>
</dbReference>
<dbReference type="InterPro" id="IPR051461">
    <property type="entry name" value="UPF0750_membrane"/>
</dbReference>
<dbReference type="InterPro" id="IPR003740">
    <property type="entry name" value="YitT"/>
</dbReference>
<dbReference type="PANTHER" id="PTHR33545">
    <property type="entry name" value="UPF0750 MEMBRANE PROTEIN YITT-RELATED"/>
    <property type="match status" value="1"/>
</dbReference>
<dbReference type="PANTHER" id="PTHR33545:SF10">
    <property type="entry name" value="UPF0750 MEMBRANE PROTEIN YPJC"/>
    <property type="match status" value="1"/>
</dbReference>
<dbReference type="Pfam" id="PF10035">
    <property type="entry name" value="DUF2179"/>
    <property type="match status" value="1"/>
</dbReference>
<dbReference type="Pfam" id="PF02588">
    <property type="entry name" value="YitT_membrane"/>
    <property type="match status" value="1"/>
</dbReference>
<dbReference type="PIRSF" id="PIRSF006483">
    <property type="entry name" value="Membrane_protein_YitT"/>
    <property type="match status" value="1"/>
</dbReference>
<keyword id="KW-1003">Cell membrane</keyword>
<keyword id="KW-0472">Membrane</keyword>
<keyword id="KW-1185">Reference proteome</keyword>
<keyword id="KW-0812">Transmembrane</keyword>
<keyword id="KW-1133">Transmembrane helix</keyword>
<evidence type="ECO:0000255" key="1"/>
<evidence type="ECO:0000305" key="2"/>
<protein>
    <recommendedName>
        <fullName>UPF0750 membrane protein YpjC</fullName>
    </recommendedName>
</protein>
<name>YPJC_BACSU</name>